<accession>P86331</accession>
<protein>
    <recommendedName>
        <fullName>Alpha-amylase</fullName>
        <ecNumber>3.2.1.1</ecNumber>
    </recommendedName>
    <alternativeName>
        <fullName>1,4-alpha-D-glucan glucanohydrolase</fullName>
    </alternativeName>
</protein>
<evidence type="ECO:0000269" key="1">
    <source>
    </source>
</evidence>
<proteinExistence type="evidence at protein level"/>
<organism>
    <name type="scientific">Bacillus sp</name>
    <dbReference type="NCBI Taxonomy" id="1409"/>
    <lineage>
        <taxon>Bacteria</taxon>
        <taxon>Bacillati</taxon>
        <taxon>Bacillota</taxon>
        <taxon>Bacilli</taxon>
        <taxon>Bacillales</taxon>
        <taxon>Bacillaceae</taxon>
        <taxon>Bacillus</taxon>
    </lineage>
</organism>
<sequence>AHQLPMGTLCNFYEWYRRDD</sequence>
<feature type="chain" id="PRO_0000383667" description="Alpha-amylase">
    <location>
        <begin position="1"/>
        <end position="20" status="greater than"/>
    </location>
</feature>
<feature type="non-terminal residue">
    <location>
        <position position="20"/>
    </location>
</feature>
<keyword id="KW-0119">Carbohydrate metabolism</keyword>
<keyword id="KW-0903">Direct protein sequencing</keyword>
<keyword id="KW-0326">Glycosidase</keyword>
<keyword id="KW-0378">Hydrolase</keyword>
<name>AMY_BACSP</name>
<reference key="1">
    <citation type="journal article" date="2010" name="Int. J. Biol. Macromol.">
        <title>A novel thermostable, acidophilic alpha-amylase from a new thermophilic 'Bacillus sp. Ferdowsicous' isolated from Ferdows hot mineral spring in Iran: Purification and biochemical characterization.</title>
        <authorList>
            <person name="Asoodeh A."/>
            <person name="Chamani J."/>
            <person name="Lagzian M."/>
        </authorList>
    </citation>
    <scope>PROTEIN SEQUENCE</scope>
    <scope>FUNCTION</scope>
    <scope>CATALYTIC ACTIVITY</scope>
    <scope>ACTIVITY REGULATION</scope>
    <scope>BIOPHYSICOCHEMICAL PROPERTIES</scope>
    <source>
        <strain>Ferdowsicous</strain>
    </source>
</reference>
<dbReference type="EC" id="3.2.1.1"/>
<dbReference type="BRENDA" id="3.2.1.1">
    <property type="organism ID" value="16643"/>
</dbReference>
<dbReference type="GO" id="GO:0004556">
    <property type="term" value="F:alpha-amylase activity"/>
    <property type="evidence" value="ECO:0007669"/>
    <property type="project" value="UniProtKB-EC"/>
</dbReference>
<comment type="function">
    <text evidence="1">Alpha-amylase active towards amylose, starch, amylopectin and maltodextrins. Has lower activity towards glycogen, and is not active towards alpha/beta-cyclodextrin.</text>
</comment>
<comment type="catalytic activity">
    <reaction evidence="1">
        <text>Endohydrolysis of (1-&gt;4)-alpha-D-glucosidic linkages in polysaccharides containing three or more (1-&gt;4)-alpha-linked D-glucose units.</text>
        <dbReference type="EC" id="3.2.1.1"/>
    </reaction>
</comment>
<comment type="activity regulation">
    <text evidence="1">Strongly inhibited by Hg (2+). Inhibited by Zn (2+). Activated by Fe (2+), Mg (2+) and Ba (2+).</text>
</comment>
<comment type="biophysicochemical properties">
    <phDependence>
        <text evidence="1">Optimum pH is 4.5. Stable from pH 4.0-7.5, activity decreases drastically above pH 7.5 and below pH 3.5.</text>
    </phDependence>
    <temperatureDependence>
        <text evidence="1">Optimum temperature is 70 degrees Celsius. Active from 30 to 75 degrees Celsius, inactivated following 150 minutes incubation at 85 degrees Celsius.</text>
    </temperatureDependence>
</comment>